<protein>
    <recommendedName>
        <fullName>Kynurenine--oxoglutarate transaminase</fullName>
        <ecNumber>2.6.1.7</ecNumber>
    </recommendedName>
    <alternativeName>
        <fullName>Glutamine transaminase K</fullName>
        <ecNumber>4.4.1.13</ecNumber>
    </alternativeName>
    <alternativeName>
        <fullName>Glutamine--phenylpyruvate transaminase</fullName>
        <ecNumber>2.6.1.64</ecNumber>
    </alternativeName>
    <alternativeName>
        <fullName>Kynurenine aminotransferase</fullName>
    </alternativeName>
</protein>
<comment type="function">
    <text evidence="1">Catalyzes the irreversible transamination of the L-tryptophan metabolite L-kynurenine to form kynurenic acid (KA). Metabolizes the cysteine conjugates of certain halogenated alkenes and alkanes to form reactive metabolites. Catalyzes the beta-elimination of S-conjugates and Se-conjugates of L-(seleno)cysteine, resulting in the cleavage of the C-S or C-Se bond (By similarity).</text>
</comment>
<comment type="catalytic activity">
    <reaction>
        <text>L-kynurenine + 2-oxoglutarate = kynurenate + L-glutamate + H2O</text>
        <dbReference type="Rhea" id="RHEA:65560"/>
        <dbReference type="ChEBI" id="CHEBI:15377"/>
        <dbReference type="ChEBI" id="CHEBI:16810"/>
        <dbReference type="ChEBI" id="CHEBI:29985"/>
        <dbReference type="ChEBI" id="CHEBI:57959"/>
        <dbReference type="ChEBI" id="CHEBI:58454"/>
        <dbReference type="EC" id="2.6.1.7"/>
    </reaction>
</comment>
<comment type="catalytic activity">
    <reaction>
        <text>3-phenylpyruvate + L-glutamine = 2-oxoglutaramate + L-phenylalanine</text>
        <dbReference type="Rhea" id="RHEA:17593"/>
        <dbReference type="ChEBI" id="CHEBI:16769"/>
        <dbReference type="ChEBI" id="CHEBI:18005"/>
        <dbReference type="ChEBI" id="CHEBI:58095"/>
        <dbReference type="ChEBI" id="CHEBI:58359"/>
        <dbReference type="EC" id="2.6.1.64"/>
    </reaction>
</comment>
<comment type="catalytic activity">
    <reaction>
        <text>an S-substituted L-cysteine + H2O = a thiol + pyruvate + NH4(+)</text>
        <dbReference type="Rhea" id="RHEA:18121"/>
        <dbReference type="ChEBI" id="CHEBI:15361"/>
        <dbReference type="ChEBI" id="CHEBI:15377"/>
        <dbReference type="ChEBI" id="CHEBI:28938"/>
        <dbReference type="ChEBI" id="CHEBI:29256"/>
        <dbReference type="ChEBI" id="CHEBI:58717"/>
        <dbReference type="EC" id="4.4.1.13"/>
    </reaction>
</comment>
<comment type="cofactor">
    <cofactor evidence="1">
        <name>pyridoxal 5'-phosphate</name>
        <dbReference type="ChEBI" id="CHEBI:597326"/>
    </cofactor>
</comment>
<comment type="pathway">
    <text>Amino-acid degradation; L-kynurenine degradation; kynurenate from L-kynurenine: step 1/2.</text>
</comment>
<comment type="subunit">
    <text evidence="1">Homodimer.</text>
</comment>
<comment type="subcellular location">
    <subcellularLocation>
        <location evidence="1">Cytoplasm</location>
    </subcellularLocation>
</comment>
<comment type="similarity">
    <text evidence="2">Belongs to the class-I pyridoxal-phosphate-dependent aminotransferase family.</text>
</comment>
<gene>
    <name type="primary">ccbl</name>
    <name type="synonym">kat</name>
    <name type="ORF">DDB_G0287269</name>
</gene>
<reference key="1">
    <citation type="journal article" date="2005" name="Nature">
        <title>The genome of the social amoeba Dictyostelium discoideum.</title>
        <authorList>
            <person name="Eichinger L."/>
            <person name="Pachebat J.A."/>
            <person name="Gloeckner G."/>
            <person name="Rajandream M.A."/>
            <person name="Sucgang R."/>
            <person name="Berriman M."/>
            <person name="Song J."/>
            <person name="Olsen R."/>
            <person name="Szafranski K."/>
            <person name="Xu Q."/>
            <person name="Tunggal B."/>
            <person name="Kummerfeld S."/>
            <person name="Madera M."/>
            <person name="Konfortov B.A."/>
            <person name="Rivero F."/>
            <person name="Bankier A.T."/>
            <person name="Lehmann R."/>
            <person name="Hamlin N."/>
            <person name="Davies R."/>
            <person name="Gaudet P."/>
            <person name="Fey P."/>
            <person name="Pilcher K."/>
            <person name="Chen G."/>
            <person name="Saunders D."/>
            <person name="Sodergren E.J."/>
            <person name="Davis P."/>
            <person name="Kerhornou A."/>
            <person name="Nie X."/>
            <person name="Hall N."/>
            <person name="Anjard C."/>
            <person name="Hemphill L."/>
            <person name="Bason N."/>
            <person name="Farbrother P."/>
            <person name="Desany B."/>
            <person name="Just E."/>
            <person name="Morio T."/>
            <person name="Rost R."/>
            <person name="Churcher C.M."/>
            <person name="Cooper J."/>
            <person name="Haydock S."/>
            <person name="van Driessche N."/>
            <person name="Cronin A."/>
            <person name="Goodhead I."/>
            <person name="Muzny D.M."/>
            <person name="Mourier T."/>
            <person name="Pain A."/>
            <person name="Lu M."/>
            <person name="Harper D."/>
            <person name="Lindsay R."/>
            <person name="Hauser H."/>
            <person name="James K.D."/>
            <person name="Quiles M."/>
            <person name="Madan Babu M."/>
            <person name="Saito T."/>
            <person name="Buchrieser C."/>
            <person name="Wardroper A."/>
            <person name="Felder M."/>
            <person name="Thangavelu M."/>
            <person name="Johnson D."/>
            <person name="Knights A."/>
            <person name="Loulseged H."/>
            <person name="Mungall K.L."/>
            <person name="Oliver K."/>
            <person name="Price C."/>
            <person name="Quail M.A."/>
            <person name="Urushihara H."/>
            <person name="Hernandez J."/>
            <person name="Rabbinowitsch E."/>
            <person name="Steffen D."/>
            <person name="Sanders M."/>
            <person name="Ma J."/>
            <person name="Kohara Y."/>
            <person name="Sharp S."/>
            <person name="Simmonds M.N."/>
            <person name="Spiegler S."/>
            <person name="Tivey A."/>
            <person name="Sugano S."/>
            <person name="White B."/>
            <person name="Walker D."/>
            <person name="Woodward J.R."/>
            <person name="Winckler T."/>
            <person name="Tanaka Y."/>
            <person name="Shaulsky G."/>
            <person name="Schleicher M."/>
            <person name="Weinstock G.M."/>
            <person name="Rosenthal A."/>
            <person name="Cox E.C."/>
            <person name="Chisholm R.L."/>
            <person name="Gibbs R.A."/>
            <person name="Loomis W.F."/>
            <person name="Platzer M."/>
            <person name="Kay R.R."/>
            <person name="Williams J.G."/>
            <person name="Dear P.H."/>
            <person name="Noegel A.A."/>
            <person name="Barrell B.G."/>
            <person name="Kuspa A."/>
        </authorList>
    </citation>
    <scope>NUCLEOTIDE SEQUENCE [LARGE SCALE GENOMIC DNA]</scope>
    <source>
        <strain>AX4</strain>
    </source>
</reference>
<name>KAT_DICDI</name>
<sequence length="435" mass="48553">MLRNTVKRLMTYTFKPSKQTSSFGPSVWLEFSPLAIKYNAVNLGQGFPNFEPPKFVKDAMIKTIEVGGFNQYTRSPGHIRLVKALSSVYSPYFGRELNAMTEIMVGVGASESLFAAISSIVNEGDEVILIEPFFDIYIGPILMAGGIPKFVTLKEEESSQAGSSDKKRSSKHWKINKEELAAAFTDKTKLIILNNPHNPVGKVYSKEELQEIADVVAKHGPNTTVISDEVYEWMTFDGEEHHRFATLPGMWERTITIGSAGKTFSITGWKVGWCIGPSNIIGAIANTHQYVPFSVPTPTQEAVAIALEQPNIKDYFKELATMYQNKRDTLLNSLTQAGLDPVIPQGTYFIMGDTSSIHLQGDQGKDTSITGMGLHLRDWNIARYLTTEYGVTTIPPSAFYCDDHQKIPENFVRFTFCKDDLTLQKAHDNLLKLKK</sequence>
<proteinExistence type="inferred from homology"/>
<accession>Q54KM6</accession>
<dbReference type="EC" id="2.6.1.7"/>
<dbReference type="EC" id="4.4.1.13"/>
<dbReference type="EC" id="2.6.1.64"/>
<dbReference type="EMBL" id="AAFI02000099">
    <property type="protein sequence ID" value="EAL63836.1"/>
    <property type="molecule type" value="Genomic_DNA"/>
</dbReference>
<dbReference type="RefSeq" id="XP_637331.1">
    <property type="nucleotide sequence ID" value="XM_632239.1"/>
</dbReference>
<dbReference type="SMR" id="Q54KM6"/>
<dbReference type="FunCoup" id="Q54KM6">
    <property type="interactions" value="354"/>
</dbReference>
<dbReference type="STRING" id="44689.Q54KM6"/>
<dbReference type="PaxDb" id="44689-DDB0231138"/>
<dbReference type="EnsemblProtists" id="EAL63836">
    <property type="protein sequence ID" value="EAL63836"/>
    <property type="gene ID" value="DDB_G0287269"/>
</dbReference>
<dbReference type="GeneID" id="8626029"/>
<dbReference type="KEGG" id="ddi:DDB_G0287269"/>
<dbReference type="dictyBase" id="DDB_G0287269">
    <property type="gene designation" value="ccbl"/>
</dbReference>
<dbReference type="VEuPathDB" id="AmoebaDB:DDB_G0287269"/>
<dbReference type="eggNOG" id="KOG0257">
    <property type="taxonomic scope" value="Eukaryota"/>
</dbReference>
<dbReference type="HOGENOM" id="CLU_017584_4_0_1"/>
<dbReference type="InParanoid" id="Q54KM6"/>
<dbReference type="OMA" id="PRDFKLC"/>
<dbReference type="PhylomeDB" id="Q54KM6"/>
<dbReference type="Reactome" id="R-DDI-71240">
    <property type="pathway name" value="Tryptophan catabolism"/>
</dbReference>
<dbReference type="Reactome" id="R-DDI-8964208">
    <property type="pathway name" value="Phenylalanine metabolism"/>
</dbReference>
<dbReference type="Reactome" id="R-DDI-8964539">
    <property type="pathway name" value="Glutamate and glutamine metabolism"/>
</dbReference>
<dbReference type="UniPathway" id="UPA00334">
    <property type="reaction ID" value="UER00726"/>
</dbReference>
<dbReference type="PRO" id="PR:Q54KM6"/>
<dbReference type="Proteomes" id="UP000002195">
    <property type="component" value="Chromosome 5"/>
</dbReference>
<dbReference type="GO" id="GO:0005737">
    <property type="term" value="C:cytoplasm"/>
    <property type="evidence" value="ECO:0000318"/>
    <property type="project" value="GO_Central"/>
</dbReference>
<dbReference type="GO" id="GO:0005739">
    <property type="term" value="C:mitochondrion"/>
    <property type="evidence" value="ECO:0000318"/>
    <property type="project" value="GO_Central"/>
</dbReference>
<dbReference type="GO" id="GO:0047804">
    <property type="term" value="F:cysteine-S-conjugate beta-lyase activity"/>
    <property type="evidence" value="ECO:0007669"/>
    <property type="project" value="UniProtKB-EC"/>
</dbReference>
<dbReference type="GO" id="GO:0047316">
    <property type="term" value="F:glutamine-phenylpyruvate transaminase activity"/>
    <property type="evidence" value="ECO:0007669"/>
    <property type="project" value="UniProtKB-EC"/>
</dbReference>
<dbReference type="GO" id="GO:0016212">
    <property type="term" value="F:kynurenine-oxoglutarate transaminase activity"/>
    <property type="evidence" value="ECO:0000318"/>
    <property type="project" value="GO_Central"/>
</dbReference>
<dbReference type="GO" id="GO:0030170">
    <property type="term" value="F:pyridoxal phosphate binding"/>
    <property type="evidence" value="ECO:0007669"/>
    <property type="project" value="InterPro"/>
</dbReference>
<dbReference type="GO" id="GO:0008483">
    <property type="term" value="F:transaminase activity"/>
    <property type="evidence" value="ECO:0000250"/>
    <property type="project" value="dictyBase"/>
</dbReference>
<dbReference type="GO" id="GO:0009058">
    <property type="term" value="P:biosynthetic process"/>
    <property type="evidence" value="ECO:0007669"/>
    <property type="project" value="InterPro"/>
</dbReference>
<dbReference type="GO" id="GO:0097053">
    <property type="term" value="P:L-kynurenine catabolic process"/>
    <property type="evidence" value="ECO:0007669"/>
    <property type="project" value="UniProtKB-UniPathway"/>
</dbReference>
<dbReference type="CDD" id="cd00609">
    <property type="entry name" value="AAT_like"/>
    <property type="match status" value="1"/>
</dbReference>
<dbReference type="FunFam" id="3.40.640.10:FF:000024">
    <property type="entry name" value="Kynurenine--oxoglutarate transaminase 3"/>
    <property type="match status" value="1"/>
</dbReference>
<dbReference type="FunFam" id="3.90.1150.10:FF:000021">
    <property type="entry name" value="Kynurenine--oxoglutarate transaminase 3"/>
    <property type="match status" value="1"/>
</dbReference>
<dbReference type="Gene3D" id="3.90.1150.10">
    <property type="entry name" value="Aspartate Aminotransferase, domain 1"/>
    <property type="match status" value="1"/>
</dbReference>
<dbReference type="Gene3D" id="3.40.640.10">
    <property type="entry name" value="Type I PLP-dependent aspartate aminotransferase-like (Major domain)"/>
    <property type="match status" value="1"/>
</dbReference>
<dbReference type="InterPro" id="IPR004839">
    <property type="entry name" value="Aminotransferase_I/II_large"/>
</dbReference>
<dbReference type="InterPro" id="IPR051326">
    <property type="entry name" value="Kynurenine-oxoglutarate_AT"/>
</dbReference>
<dbReference type="InterPro" id="IPR015424">
    <property type="entry name" value="PyrdxlP-dep_Trfase"/>
</dbReference>
<dbReference type="InterPro" id="IPR015421">
    <property type="entry name" value="PyrdxlP-dep_Trfase_major"/>
</dbReference>
<dbReference type="InterPro" id="IPR015422">
    <property type="entry name" value="PyrdxlP-dep_Trfase_small"/>
</dbReference>
<dbReference type="PANTHER" id="PTHR43807">
    <property type="entry name" value="FI04487P"/>
    <property type="match status" value="1"/>
</dbReference>
<dbReference type="PANTHER" id="PTHR43807:SF20">
    <property type="entry name" value="FI04487P"/>
    <property type="match status" value="1"/>
</dbReference>
<dbReference type="Pfam" id="PF00155">
    <property type="entry name" value="Aminotran_1_2"/>
    <property type="match status" value="1"/>
</dbReference>
<dbReference type="SUPFAM" id="SSF53383">
    <property type="entry name" value="PLP-dependent transferases"/>
    <property type="match status" value="1"/>
</dbReference>
<evidence type="ECO:0000250" key="1"/>
<evidence type="ECO:0000305" key="2"/>
<keyword id="KW-0032">Aminotransferase</keyword>
<keyword id="KW-0963">Cytoplasm</keyword>
<keyword id="KW-0456">Lyase</keyword>
<keyword id="KW-0663">Pyridoxal phosphate</keyword>
<keyword id="KW-1185">Reference proteome</keyword>
<keyword id="KW-0808">Transferase</keyword>
<organism>
    <name type="scientific">Dictyostelium discoideum</name>
    <name type="common">Social amoeba</name>
    <dbReference type="NCBI Taxonomy" id="44689"/>
    <lineage>
        <taxon>Eukaryota</taxon>
        <taxon>Amoebozoa</taxon>
        <taxon>Evosea</taxon>
        <taxon>Eumycetozoa</taxon>
        <taxon>Dictyostelia</taxon>
        <taxon>Dictyosteliales</taxon>
        <taxon>Dictyosteliaceae</taxon>
        <taxon>Dictyostelium</taxon>
    </lineage>
</organism>
<feature type="chain" id="PRO_0000327725" description="Kynurenine--oxoglutarate transaminase">
    <location>
        <begin position="1"/>
        <end position="435"/>
    </location>
</feature>
<feature type="binding site" evidence="1">
    <location>
        <position position="46"/>
    </location>
    <ligand>
        <name>substrate</name>
    </ligand>
</feature>
<feature type="binding site" evidence="1">
    <location>
        <position position="198"/>
    </location>
    <ligand>
        <name>substrate</name>
    </ligand>
</feature>
<feature type="binding site" evidence="1">
    <location>
        <position position="413"/>
    </location>
    <ligand>
        <name>substrate</name>
    </ligand>
</feature>
<feature type="modified residue" description="N6-(pyridoxal phosphate)lysine" evidence="1">
    <location>
        <position position="262"/>
    </location>
</feature>